<dbReference type="EC" id="2.7.11.1" evidence="2"/>
<dbReference type="EMBL" id="AY733040">
    <property type="protein sequence ID" value="AAW57534.1"/>
    <property type="molecule type" value="mRNA"/>
</dbReference>
<dbReference type="EMBL" id="BX284601">
    <property type="protein sequence ID" value="CCD72943.1"/>
    <property type="molecule type" value="Genomic_DNA"/>
</dbReference>
<dbReference type="PIR" id="T32930">
    <property type="entry name" value="T32930"/>
</dbReference>
<dbReference type="RefSeq" id="NP_490840.2">
    <property type="nucleotide sequence ID" value="NM_058439.5"/>
</dbReference>
<dbReference type="SMR" id="O44997"/>
<dbReference type="BioGRID" id="52023">
    <property type="interactions" value="1"/>
</dbReference>
<dbReference type="FunCoup" id="O44997">
    <property type="interactions" value="772"/>
</dbReference>
<dbReference type="STRING" id="6239.K12C11.4a.1"/>
<dbReference type="PaxDb" id="6239-K12C11.4"/>
<dbReference type="PeptideAtlas" id="O44997"/>
<dbReference type="EnsemblMetazoa" id="K12C11.4a.1">
    <property type="protein sequence ID" value="K12C11.4a.1"/>
    <property type="gene ID" value="WBGene00003400"/>
</dbReference>
<dbReference type="GeneID" id="187322"/>
<dbReference type="KEGG" id="cel:CELE_K12C11.4"/>
<dbReference type="UCSC" id="K12C11.4">
    <property type="organism name" value="c. elegans"/>
</dbReference>
<dbReference type="AGR" id="WB:WBGene00003400"/>
<dbReference type="CTD" id="187322"/>
<dbReference type="WormBase" id="K12C11.4a">
    <property type="protein sequence ID" value="CE40262"/>
    <property type="gene ID" value="WBGene00003400"/>
    <property type="gene designation" value="dapk-1"/>
</dbReference>
<dbReference type="eggNOG" id="KOG0032">
    <property type="taxonomic scope" value="Eukaryota"/>
</dbReference>
<dbReference type="HOGENOM" id="CLU_002849_2_0_1"/>
<dbReference type="InParanoid" id="O44997"/>
<dbReference type="OMA" id="EPYHMAY"/>
<dbReference type="OrthoDB" id="504170at2759"/>
<dbReference type="PhylomeDB" id="O44997"/>
<dbReference type="PRO" id="PR:O44997"/>
<dbReference type="Proteomes" id="UP000001940">
    <property type="component" value="Chromosome I"/>
</dbReference>
<dbReference type="Bgee" id="WBGene00003400">
    <property type="expression patterns" value="Expressed in pharyngeal muscle cell (C elegans) and 3 other cell types or tissues"/>
</dbReference>
<dbReference type="ExpressionAtlas" id="O44997">
    <property type="expression patterns" value="baseline and differential"/>
</dbReference>
<dbReference type="GO" id="GO:0005856">
    <property type="term" value="C:cytoskeleton"/>
    <property type="evidence" value="ECO:0007669"/>
    <property type="project" value="UniProtKB-SubCell"/>
</dbReference>
<dbReference type="GO" id="GO:0005829">
    <property type="term" value="C:cytosol"/>
    <property type="evidence" value="ECO:0007669"/>
    <property type="project" value="UniProtKB-SubCell"/>
</dbReference>
<dbReference type="GO" id="GO:0005634">
    <property type="term" value="C:nucleus"/>
    <property type="evidence" value="ECO:0000318"/>
    <property type="project" value="GO_Central"/>
</dbReference>
<dbReference type="GO" id="GO:0005524">
    <property type="term" value="F:ATP binding"/>
    <property type="evidence" value="ECO:0007669"/>
    <property type="project" value="UniProtKB-KW"/>
</dbReference>
<dbReference type="GO" id="GO:0005525">
    <property type="term" value="F:GTP binding"/>
    <property type="evidence" value="ECO:0007669"/>
    <property type="project" value="UniProtKB-KW"/>
</dbReference>
<dbReference type="GO" id="GO:0046872">
    <property type="term" value="F:metal ion binding"/>
    <property type="evidence" value="ECO:0007669"/>
    <property type="project" value="UniProtKB-KW"/>
</dbReference>
<dbReference type="GO" id="GO:0106310">
    <property type="term" value="F:protein serine kinase activity"/>
    <property type="evidence" value="ECO:0007669"/>
    <property type="project" value="RHEA"/>
</dbReference>
<dbReference type="GO" id="GO:0004674">
    <property type="term" value="F:protein serine/threonine kinase activity"/>
    <property type="evidence" value="ECO:0000318"/>
    <property type="project" value="GO_Central"/>
</dbReference>
<dbReference type="GO" id="GO:0045087">
    <property type="term" value="P:innate immune response"/>
    <property type="evidence" value="ECO:0007669"/>
    <property type="project" value="UniProtKB-KW"/>
</dbReference>
<dbReference type="GO" id="GO:0035556">
    <property type="term" value="P:intracellular signal transduction"/>
    <property type="evidence" value="ECO:0000318"/>
    <property type="project" value="GO_Central"/>
</dbReference>
<dbReference type="GO" id="GO:0043065">
    <property type="term" value="P:positive regulation of apoptotic process"/>
    <property type="evidence" value="ECO:0000318"/>
    <property type="project" value="GO_Central"/>
</dbReference>
<dbReference type="CDD" id="cd08782">
    <property type="entry name" value="Death_DAPK1"/>
    <property type="match status" value="1"/>
</dbReference>
<dbReference type="FunFam" id="1.10.510.10:FF:000218">
    <property type="entry name" value="Death-associated protein kinase 1"/>
    <property type="match status" value="1"/>
</dbReference>
<dbReference type="FunFam" id="3.30.200.20:FF:000866">
    <property type="entry name" value="Death-associated protein kinase dapk-1"/>
    <property type="match status" value="1"/>
</dbReference>
<dbReference type="Gene3D" id="1.25.40.20">
    <property type="entry name" value="Ankyrin repeat-containing domain"/>
    <property type="match status" value="1"/>
</dbReference>
<dbReference type="Gene3D" id="1.10.533.10">
    <property type="entry name" value="Death Domain, Fas"/>
    <property type="match status" value="1"/>
</dbReference>
<dbReference type="Gene3D" id="3.40.50.300">
    <property type="entry name" value="P-loop containing nucleotide triphosphate hydrolases"/>
    <property type="match status" value="1"/>
</dbReference>
<dbReference type="Gene3D" id="3.30.200.20">
    <property type="entry name" value="Phosphorylase Kinase, domain 1"/>
    <property type="match status" value="1"/>
</dbReference>
<dbReference type="Gene3D" id="1.10.510.10">
    <property type="entry name" value="Transferase(Phosphotransferase) domain 1"/>
    <property type="match status" value="1"/>
</dbReference>
<dbReference type="InterPro" id="IPR002110">
    <property type="entry name" value="Ankyrin_rpt"/>
</dbReference>
<dbReference type="InterPro" id="IPR036770">
    <property type="entry name" value="Ankyrin_rpt-contain_sf"/>
</dbReference>
<dbReference type="InterPro" id="IPR011029">
    <property type="entry name" value="DEATH-like_dom_sf"/>
</dbReference>
<dbReference type="InterPro" id="IPR000488">
    <property type="entry name" value="Death_dom"/>
</dbReference>
<dbReference type="InterPro" id="IPR011009">
    <property type="entry name" value="Kinase-like_dom_sf"/>
</dbReference>
<dbReference type="InterPro" id="IPR027417">
    <property type="entry name" value="P-loop_NTPase"/>
</dbReference>
<dbReference type="InterPro" id="IPR000719">
    <property type="entry name" value="Prot_kinase_dom"/>
</dbReference>
<dbReference type="InterPro" id="IPR017441">
    <property type="entry name" value="Protein_kinase_ATP_BS"/>
</dbReference>
<dbReference type="InterPro" id="IPR020859">
    <property type="entry name" value="ROC"/>
</dbReference>
<dbReference type="InterPro" id="IPR008271">
    <property type="entry name" value="Ser/Thr_kinase_AS"/>
</dbReference>
<dbReference type="PANTHER" id="PTHR24342:SF14">
    <property type="entry name" value="DEATH-ASSOCIATED PROTEIN KINASE DAPK-1"/>
    <property type="match status" value="1"/>
</dbReference>
<dbReference type="PANTHER" id="PTHR24342">
    <property type="entry name" value="SERINE/THREONINE-PROTEIN KINASE 17"/>
    <property type="match status" value="1"/>
</dbReference>
<dbReference type="Pfam" id="PF00023">
    <property type="entry name" value="Ank"/>
    <property type="match status" value="3"/>
</dbReference>
<dbReference type="Pfam" id="PF12796">
    <property type="entry name" value="Ank_2"/>
    <property type="match status" value="2"/>
</dbReference>
<dbReference type="Pfam" id="PF00531">
    <property type="entry name" value="Death"/>
    <property type="match status" value="1"/>
</dbReference>
<dbReference type="Pfam" id="PF00069">
    <property type="entry name" value="Pkinase"/>
    <property type="match status" value="1"/>
</dbReference>
<dbReference type="PRINTS" id="PR01415">
    <property type="entry name" value="ANKYRIN"/>
</dbReference>
<dbReference type="SMART" id="SM00248">
    <property type="entry name" value="ANK"/>
    <property type="match status" value="9"/>
</dbReference>
<dbReference type="SMART" id="SM00005">
    <property type="entry name" value="DEATH"/>
    <property type="match status" value="1"/>
</dbReference>
<dbReference type="SMART" id="SM00220">
    <property type="entry name" value="S_TKc"/>
    <property type="match status" value="1"/>
</dbReference>
<dbReference type="SUPFAM" id="SSF48403">
    <property type="entry name" value="Ankyrin repeat"/>
    <property type="match status" value="1"/>
</dbReference>
<dbReference type="SUPFAM" id="SSF47986">
    <property type="entry name" value="DEATH domain"/>
    <property type="match status" value="1"/>
</dbReference>
<dbReference type="SUPFAM" id="SSF52540">
    <property type="entry name" value="P-loop containing nucleoside triphosphate hydrolases"/>
    <property type="match status" value="1"/>
</dbReference>
<dbReference type="SUPFAM" id="SSF56112">
    <property type="entry name" value="Protein kinase-like (PK-like)"/>
    <property type="match status" value="1"/>
</dbReference>
<dbReference type="PROSITE" id="PS50297">
    <property type="entry name" value="ANK_REP_REGION"/>
    <property type="match status" value="1"/>
</dbReference>
<dbReference type="PROSITE" id="PS50088">
    <property type="entry name" value="ANK_REPEAT"/>
    <property type="match status" value="7"/>
</dbReference>
<dbReference type="PROSITE" id="PS50017">
    <property type="entry name" value="DEATH_DOMAIN"/>
    <property type="match status" value="1"/>
</dbReference>
<dbReference type="PROSITE" id="PS00107">
    <property type="entry name" value="PROTEIN_KINASE_ATP"/>
    <property type="match status" value="1"/>
</dbReference>
<dbReference type="PROSITE" id="PS50011">
    <property type="entry name" value="PROTEIN_KINASE_DOM"/>
    <property type="match status" value="1"/>
</dbReference>
<dbReference type="PROSITE" id="PS00108">
    <property type="entry name" value="PROTEIN_KINASE_ST"/>
    <property type="match status" value="1"/>
</dbReference>
<dbReference type="PROSITE" id="PS51424">
    <property type="entry name" value="ROC"/>
    <property type="match status" value="1"/>
</dbReference>
<comment type="function">
    <text evidence="8 9 10 11">Negative regulator of epidermal barrier repair and innate immune responses to wounding (PubMed:19164535, PubMed:27661253). The role in epidermal tissue integrity and wound healing is established through the inhibition of epidermal microtubule stability, possibly via the negative regulation of the microtubule minus-end binding protein ptrn-1 (PubMed:27661253). In epidermis, prevents expression of specific unc-44 isoforms probably by promoting nuclear localization of pinn-1, which in turn may affect sydn-1-ssup-72-mediated regulation of alternative polyadenylation of unc-44 mRNA (PubMed:28087624). Appears to act downstream of or in parallel to muscarinic signaling in the regulation of autophagy (PubMed:17785524).</text>
</comment>
<comment type="catalytic activity">
    <reaction evidence="2">
        <text>L-seryl-[protein] + ATP = O-phospho-L-seryl-[protein] + ADP + H(+)</text>
        <dbReference type="Rhea" id="RHEA:17989"/>
        <dbReference type="Rhea" id="RHEA-COMP:9863"/>
        <dbReference type="Rhea" id="RHEA-COMP:11604"/>
        <dbReference type="ChEBI" id="CHEBI:15378"/>
        <dbReference type="ChEBI" id="CHEBI:29999"/>
        <dbReference type="ChEBI" id="CHEBI:30616"/>
        <dbReference type="ChEBI" id="CHEBI:83421"/>
        <dbReference type="ChEBI" id="CHEBI:456216"/>
        <dbReference type="EC" id="2.7.11.1"/>
    </reaction>
</comment>
<comment type="catalytic activity">
    <reaction evidence="2">
        <text>L-threonyl-[protein] + ATP = O-phospho-L-threonyl-[protein] + ADP + H(+)</text>
        <dbReference type="Rhea" id="RHEA:46608"/>
        <dbReference type="Rhea" id="RHEA-COMP:11060"/>
        <dbReference type="Rhea" id="RHEA-COMP:11605"/>
        <dbReference type="ChEBI" id="CHEBI:15378"/>
        <dbReference type="ChEBI" id="CHEBI:30013"/>
        <dbReference type="ChEBI" id="CHEBI:30616"/>
        <dbReference type="ChEBI" id="CHEBI:61977"/>
        <dbReference type="ChEBI" id="CHEBI:456216"/>
        <dbReference type="EC" id="2.7.11.1"/>
    </reaction>
</comment>
<comment type="cofactor">
    <cofactor evidence="2">
        <name>Mg(2+)</name>
        <dbReference type="ChEBI" id="CHEBI:18420"/>
    </cofactor>
</comment>
<comment type="subunit">
    <text evidence="10">Interacts with ptrn-1.</text>
</comment>
<comment type="subcellular location">
    <subcellularLocation>
        <location evidence="10">Cytoplasm</location>
        <location evidence="10">Cytosol</location>
    </subcellularLocation>
    <subcellularLocation>
        <location evidence="10">Cytoplasm</location>
        <location evidence="10">Cytoskeleton</location>
    </subcellularLocation>
    <text evidence="10">Exhibits movement along microtubules.</text>
</comment>
<comment type="tissue specificity">
    <text evidence="9">Expressed in epidermis, muscles and neurons.</text>
</comment>
<comment type="developmental stage">
    <text evidence="9">Present from late embryogenesis onwards.</text>
</comment>
<comment type="disruption phenotype">
    <text evidence="8 9 10">Beginning in the L3 stage, animals display striking and progressive defects in morphology of the epidermis and cuticle in several body regions, particularly in the nose, tail, vulva, and the dorsal midline in the region of the posterior pharyngeal bulb (PubMed:19164535, PubMed:27661253). The cuticle in these regions becomes up to 5-10 times thicker than the wild-type, at the expense of underlying epidermis (PubMed:19164535, PubMed:27661253). Up-regulates innate immune responses to damage (PubMed:19164535). Decreases starvation-induced autophagy (PubMed:17785524). Disorganization and hyper-stabilization of epidermal microtubules and reduced microtubule growth rates (PubMed:27661253). Treatment with a microtubule stabilizing drug, paclitaxel, results in enhanced epidermal morphology defects (PubMed:27661253). In a ptrn-1 mutant background, suppression of the epidermal morphology defects (PubMed:27661253).</text>
</comment>
<comment type="similarity">
    <text evidence="3">Belongs to the protein kinase superfamily. CAMK Ser/Thr protein kinase family. DAP kinase subfamily.</text>
</comment>
<reference evidence="12" key="1">
    <citation type="submission" date="2004-08" db="EMBL/GenBank/DDBJ databases">
        <title>Molecular characterization of DAP kinase in Caenorhabditis elegans.</title>
        <authorList>
            <person name="Chen J.-Y."/>
            <person name="Chen R.-H."/>
            <person name="Wu Y.-C."/>
        </authorList>
    </citation>
    <scope>NUCLEOTIDE SEQUENCE [MRNA]</scope>
</reference>
<reference key="2">
    <citation type="journal article" date="1998" name="Science">
        <title>Genome sequence of the nematode C. elegans: a platform for investigating biology.</title>
        <authorList>
            <consortium name="The C. elegans sequencing consortium"/>
        </authorList>
    </citation>
    <scope>NUCLEOTIDE SEQUENCE [LARGE SCALE GENOMIC DNA]</scope>
    <source>
        <strain>Bristol N2</strain>
    </source>
</reference>
<reference evidence="12" key="3">
    <citation type="journal article" date="2007" name="Genes Dev.">
        <title>Dual roles of autophagy in the survival of Caenorhabditis elegans during starvation.</title>
        <authorList>
            <person name="Kang C."/>
            <person name="You Y.J."/>
            <person name="Avery L."/>
        </authorList>
    </citation>
    <scope>FUNCTION</scope>
    <scope>DISRUPTION PHENOTYPE</scope>
</reference>
<reference evidence="12" key="4">
    <citation type="journal article" date="2009" name="Proc. Natl. Acad. Sci. U.S.A.">
        <title>Negative regulation of Caenorhabditis elegans epidermal damage responses by death-associated protein kinase.</title>
        <authorList>
            <person name="Tong A."/>
            <person name="Lynn G."/>
            <person name="Ngo V."/>
            <person name="Wong D."/>
            <person name="Moseley S.L."/>
            <person name="Ewbank J.J."/>
            <person name="Goncharov A."/>
            <person name="Wu Y.C."/>
            <person name="Pujol N."/>
            <person name="Chisholm A.D."/>
        </authorList>
    </citation>
    <scope>FUNCTION</scope>
    <scope>TISSUE SPECIFICITY</scope>
    <scope>DEVELOPMENTAL STAGE</scope>
    <scope>DISRUPTION PHENOTYPE</scope>
</reference>
<reference key="5">
    <citation type="journal article" date="2016" name="Elife">
        <title>DAPK interacts with Patronin and the microtubule cytoskeleton in epidermal development and wound repair.</title>
        <authorList>
            <person name="Chuang M."/>
            <person name="Hsiao T.I."/>
            <person name="Tong A."/>
            <person name="Xu S."/>
            <person name="Chisholm A.D."/>
        </authorList>
    </citation>
    <scope>FUNCTION</scope>
    <scope>INTERACTION WITH PTRN-1</scope>
    <scope>SUBCELLULAR LOCATION</scope>
    <scope>DISRUPTION PHENOTYPE</scope>
    <scope>MUTAGENESIS OF LYS-57 AND SER-179</scope>
</reference>
<reference key="6">
    <citation type="journal article" date="2017" name="Development">
        <title>Tissue-specific regulation of alternative polyadenylation represses expression of a neuronal ankyrin isoform in C. elegans epidermal development.</title>
        <authorList>
            <person name="Chen F."/>
            <person name="Chisholm A.D."/>
            <person name="Jin Y."/>
        </authorList>
    </citation>
    <scope>FUNCTION</scope>
    <scope>MUTAGENESIS OF SER-179</scope>
</reference>
<gene>
    <name evidence="13" type="primary">dapk-1</name>
    <name type="synonym">mor-3</name>
    <name type="synonym">tag-119</name>
    <name type="ORF">K12C11.4</name>
</gene>
<accession>O44997</accession>
<accession>Q3ZLV1</accession>
<protein>
    <recommendedName>
        <fullName>Death-associated protein kinase dapk-1</fullName>
        <ecNumber evidence="2">2.7.11.1</ecNumber>
    </recommendedName>
</protein>
<organism>
    <name type="scientific">Caenorhabditis elegans</name>
    <dbReference type="NCBI Taxonomy" id="6239"/>
    <lineage>
        <taxon>Eukaryota</taxon>
        <taxon>Metazoa</taxon>
        <taxon>Ecdysozoa</taxon>
        <taxon>Nematoda</taxon>
        <taxon>Chromadorea</taxon>
        <taxon>Rhabditida</taxon>
        <taxon>Rhabditina</taxon>
        <taxon>Rhabditomorpha</taxon>
        <taxon>Rhabditoidea</taxon>
        <taxon>Rhabditidae</taxon>
        <taxon>Peloderinae</taxon>
        <taxon>Caenorhabditis</taxon>
    </lineage>
</organism>
<sequence>MSDDVNSSATSTSSSTVHFDDTPFEDVYEIETELGSGQFAVVRRVRDRKTGEKYAAKFIKKRRYATSRRGVTRQNIEREVRVLQKIRGNSNVVELHAVYETASDVIIVLELVSGGELFDHVCAKECLDEVEAAAFIKQILLAVRHLHSLHIVHLDIKPENVMLKQRGDSQIKIIDFGLSREIEPGAVVKDMVGTPEFVAPEVVNYEALSPATDMWAVGVVTYILLSGGSPFLGDNRDETFSNITRVRYHFSDRYFKNTSKHAKDFIYRLFVRDVDQRATVEECLQHPWIRGPEGNAIDIRKASCITISHIQSFKTRQRWKRCVELVMVLLKASKSSRRIGDGRFDEEDMVASCTLICAEEGNLRALHKLSALHKLLPNATRKSLKSSFSEPNGATAMHCAAKYGHAEVFNYFHMKGGNICARDDNGDTPLHVACRFAQHTVAGYVANEKIDVDSINKTGETALHCAVESADTRVVRLLLQLRPRLDLPNASGDTVLHLAADSINPRIVPLLVCLAPPLHLRNIREETPLHVAAARGHVDCVQALLDANSPIDAVEQDGKTALIIALENGNVDIASILITNGCDINHADHHGDTALHIASKHGLLQAVQTLCHCAVTVDSVNANKKTALHLAAHYGHVDIIRVLLLARADVTLRGDDGLTAELVAVAAERLEAHSLLKMVKSQEIREEYISQLYPLDTSLRRIKLKLLGHSQSGKTRLVQTLHSSRGISSFLESVTRRISDHYSPSSSMKDDGIHSTNGSFVSESNNNSSFDLAAAAGSKYAPPHSQYTRGIDVQTVNINGCGEFSVWEFGGYEPMHTCYDHFVGNADCIHLILYRTSDPTEVQYKQILYWMNFLKGRVTPFEPIGHCGFSSRRSKVIIVGTHATSSLFPQMNQEGEYVSSDIEAMLNTVRLRFETHFDMDHRLILLDATNPSCIGMKTLKMELAKCRTNILAKLLKPLAILDTVVNHLNLVRKKHANFPVITWPDFIQLVRNEINPLTGDAHCRQIVQQLQLIGELVYLRNDLCDADYVVLNAEWFGTHILGQLLSAEFLSKASPNGSYHTSSLAKIFPEIPEQSDLMTILEVLQLCAPDARTGAHEFPVFIQTEAPDSIWRPYSLKEKERDTVYGGVRILPMRGMERSLHSTFPRIQVALRRSINDYQPAKDTQLHQWSECSKLVSQDREAVIRMVGDAVEIRARGPSESATSMFYFMEDLINLVEHAAAEVGPGISLERHFISPKHLKEHREHPALFPPESMMEMQQRESLSVKGTQDEEELFTDVVCFGSRDVARHLTLGIDVGVADLQMASRCELACLLDPPHAMGRDWSILAVKLQLTDQVPDVDSTGQSLSRTDQLLNEWAIHHPEQASVGNLCRILVELGRCDARDALYRTVPLYVFAPLEDQFLLETNDSGVVSSCHSSSEHNPINI</sequence>
<feature type="chain" id="PRO_0000400089" description="Death-associated protein kinase dapk-1">
    <location>
        <begin position="1"/>
        <end position="1425"/>
    </location>
</feature>
<feature type="domain" description="Protein kinase" evidence="5">
    <location>
        <begin position="28"/>
        <end position="289"/>
    </location>
</feature>
<feature type="repeat" description="ANK 1" evidence="3">
    <location>
        <begin position="392"/>
        <end position="421"/>
    </location>
</feature>
<feature type="repeat" description="ANK 2" evidence="3">
    <location>
        <begin position="425"/>
        <end position="454"/>
    </location>
</feature>
<feature type="repeat" description="ANK 3" evidence="3">
    <location>
        <begin position="458"/>
        <end position="487"/>
    </location>
</feature>
<feature type="repeat" description="ANK 4" evidence="3">
    <location>
        <begin position="491"/>
        <end position="520"/>
    </location>
</feature>
<feature type="repeat" description="ANK 5" evidence="3">
    <location>
        <begin position="524"/>
        <end position="553"/>
    </location>
</feature>
<feature type="repeat" description="ANK 6" evidence="3">
    <location>
        <begin position="557"/>
        <end position="586"/>
    </location>
</feature>
<feature type="repeat" description="ANK 7" evidence="3">
    <location>
        <begin position="590"/>
        <end position="619"/>
    </location>
</feature>
<feature type="repeat" description="ANK 8" evidence="3">
    <location>
        <begin position="623"/>
        <end position="652"/>
    </location>
</feature>
<feature type="domain" description="Roc" evidence="6">
    <location>
        <begin position="695"/>
        <end position="950"/>
    </location>
</feature>
<feature type="repeat" description="ANK 9" evidence="3">
    <location>
        <begin position="810"/>
        <end position="841"/>
    </location>
</feature>
<feature type="repeat" description="ANK 10" evidence="3">
    <location>
        <begin position="934"/>
        <end position="963"/>
    </location>
</feature>
<feature type="domain" description="Death" evidence="4">
    <location>
        <begin position="1308"/>
        <end position="1389"/>
    </location>
</feature>
<feature type="active site" description="Proton acceptor" evidence="1 5 7">
    <location>
        <position position="155"/>
    </location>
</feature>
<feature type="binding site" evidence="2 5">
    <location>
        <begin position="34"/>
        <end position="42"/>
    </location>
    <ligand>
        <name>ATP</name>
        <dbReference type="ChEBI" id="CHEBI:30616"/>
    </ligand>
</feature>
<feature type="binding site" evidence="2 5">
    <location>
        <position position="57"/>
    </location>
    <ligand>
        <name>ATP</name>
        <dbReference type="ChEBI" id="CHEBI:30616"/>
    </ligand>
</feature>
<feature type="mutagenesis site" description="Normal localization and movement along microtubules and no exhibition of epidermal morphology defects." evidence="10">
    <original>K</original>
    <variation>A</variation>
    <location>
        <position position="57"/>
    </location>
</feature>
<feature type="mutagenesis site" description="In ju4; Causes severe epidermal morphology defects, including progressive accumulation of the cuticle and degeneration of the underlying epidermis, accelerated wound closure, and disorganization and hyper-stabilization of epidermal microtubules. Reduces microtubule growth rates. Increased ptrn-1 filaments in the anterior lateral epidermis. In L4 larvae and in adults, disrupts expression of specific unc-44 mRNAs in L4 seam cells and in head and tail epidermal cells. Reduces nuclear localization of pinn-1 in epidermal cells. Increases expression of antimicrobial peptides. Epidermal defects are suppressed in an unc-44 or ptrn-1 mutant background." evidence="10 11">
    <original>S</original>
    <variation>L</variation>
    <location>
        <position position="179"/>
    </location>
</feature>
<proteinExistence type="evidence at protein level"/>
<evidence type="ECO:0000250" key="1">
    <source>
        <dbReference type="UniProtKB" id="P28523"/>
    </source>
</evidence>
<evidence type="ECO:0000250" key="2">
    <source>
        <dbReference type="UniProtKB" id="P53355"/>
    </source>
</evidence>
<evidence type="ECO:0000255" key="3"/>
<evidence type="ECO:0000255" key="4">
    <source>
        <dbReference type="PROSITE-ProRule" id="PRU00064"/>
    </source>
</evidence>
<evidence type="ECO:0000255" key="5">
    <source>
        <dbReference type="PROSITE-ProRule" id="PRU00159"/>
    </source>
</evidence>
<evidence type="ECO:0000255" key="6">
    <source>
        <dbReference type="PROSITE-ProRule" id="PRU00758"/>
    </source>
</evidence>
<evidence type="ECO:0000255" key="7">
    <source>
        <dbReference type="PROSITE-ProRule" id="PRU10027"/>
    </source>
</evidence>
<evidence type="ECO:0000269" key="8">
    <source>
    </source>
</evidence>
<evidence type="ECO:0000269" key="9">
    <source>
    </source>
</evidence>
<evidence type="ECO:0000269" key="10">
    <source>
    </source>
</evidence>
<evidence type="ECO:0000269" key="11">
    <source>
    </source>
</evidence>
<evidence type="ECO:0000305" key="12"/>
<evidence type="ECO:0000312" key="13">
    <source>
        <dbReference type="WormBase" id="K12C11.4a"/>
    </source>
</evidence>
<name>DAPK_CAEEL</name>
<keyword id="KW-0040">ANK repeat</keyword>
<keyword id="KW-0067">ATP-binding</keyword>
<keyword id="KW-0963">Cytoplasm</keyword>
<keyword id="KW-0206">Cytoskeleton</keyword>
<keyword id="KW-0217">Developmental protein</keyword>
<keyword id="KW-0342">GTP-binding</keyword>
<keyword id="KW-0391">Immunity</keyword>
<keyword id="KW-0399">Innate immunity</keyword>
<keyword id="KW-0418">Kinase</keyword>
<keyword id="KW-0460">Magnesium</keyword>
<keyword id="KW-0479">Metal-binding</keyword>
<keyword id="KW-0547">Nucleotide-binding</keyword>
<keyword id="KW-1185">Reference proteome</keyword>
<keyword id="KW-0677">Repeat</keyword>
<keyword id="KW-0723">Serine/threonine-protein kinase</keyword>
<keyword id="KW-0808">Transferase</keyword>